<organism>
    <name type="scientific">Staphylococcus aureus (strain Mu50 / ATCC 700699)</name>
    <dbReference type="NCBI Taxonomy" id="158878"/>
    <lineage>
        <taxon>Bacteria</taxon>
        <taxon>Bacillati</taxon>
        <taxon>Bacillota</taxon>
        <taxon>Bacilli</taxon>
        <taxon>Bacillales</taxon>
        <taxon>Staphylococcaceae</taxon>
        <taxon>Staphylococcus</taxon>
    </lineage>
</organism>
<gene>
    <name evidence="1" type="primary">rpoA</name>
    <name type="ordered locus">SAV2224</name>
</gene>
<proteinExistence type="inferred from homology"/>
<name>RPOA_STAAM</name>
<keyword id="KW-0240">DNA-directed RNA polymerase</keyword>
<keyword id="KW-0548">Nucleotidyltransferase</keyword>
<keyword id="KW-0804">Transcription</keyword>
<keyword id="KW-0808">Transferase</keyword>
<reference key="1">
    <citation type="journal article" date="2001" name="Lancet">
        <title>Whole genome sequencing of meticillin-resistant Staphylococcus aureus.</title>
        <authorList>
            <person name="Kuroda M."/>
            <person name="Ohta T."/>
            <person name="Uchiyama I."/>
            <person name="Baba T."/>
            <person name="Yuzawa H."/>
            <person name="Kobayashi I."/>
            <person name="Cui L."/>
            <person name="Oguchi A."/>
            <person name="Aoki K."/>
            <person name="Nagai Y."/>
            <person name="Lian J.-Q."/>
            <person name="Ito T."/>
            <person name="Kanamori M."/>
            <person name="Matsumaru H."/>
            <person name="Maruyama A."/>
            <person name="Murakami H."/>
            <person name="Hosoyama A."/>
            <person name="Mizutani-Ui Y."/>
            <person name="Takahashi N.K."/>
            <person name="Sawano T."/>
            <person name="Inoue R."/>
            <person name="Kaito C."/>
            <person name="Sekimizu K."/>
            <person name="Hirakawa H."/>
            <person name="Kuhara S."/>
            <person name="Goto S."/>
            <person name="Yabuzaki J."/>
            <person name="Kanehisa M."/>
            <person name="Yamashita A."/>
            <person name="Oshima K."/>
            <person name="Furuya K."/>
            <person name="Yoshino C."/>
            <person name="Shiba T."/>
            <person name="Hattori M."/>
            <person name="Ogasawara N."/>
            <person name="Hayashi H."/>
            <person name="Hiramatsu K."/>
        </authorList>
    </citation>
    <scope>NUCLEOTIDE SEQUENCE [LARGE SCALE GENOMIC DNA]</scope>
    <source>
        <strain>Mu50 / ATCC 700699</strain>
    </source>
</reference>
<dbReference type="EC" id="2.7.7.6" evidence="1"/>
<dbReference type="EMBL" id="BA000017">
    <property type="protein sequence ID" value="BAB58386.1"/>
    <property type="molecule type" value="Genomic_DNA"/>
</dbReference>
<dbReference type="RefSeq" id="WP_000569649.1">
    <property type="nucleotide sequence ID" value="NC_002758.2"/>
</dbReference>
<dbReference type="SMR" id="P66705"/>
<dbReference type="KEGG" id="sav:SAV2224"/>
<dbReference type="HOGENOM" id="CLU_053084_0_1_9"/>
<dbReference type="PhylomeDB" id="P66705"/>
<dbReference type="Proteomes" id="UP000002481">
    <property type="component" value="Chromosome"/>
</dbReference>
<dbReference type="GO" id="GO:0005737">
    <property type="term" value="C:cytoplasm"/>
    <property type="evidence" value="ECO:0007669"/>
    <property type="project" value="UniProtKB-ARBA"/>
</dbReference>
<dbReference type="GO" id="GO:0000428">
    <property type="term" value="C:DNA-directed RNA polymerase complex"/>
    <property type="evidence" value="ECO:0007669"/>
    <property type="project" value="UniProtKB-KW"/>
</dbReference>
<dbReference type="GO" id="GO:0003677">
    <property type="term" value="F:DNA binding"/>
    <property type="evidence" value="ECO:0007669"/>
    <property type="project" value="UniProtKB-UniRule"/>
</dbReference>
<dbReference type="GO" id="GO:0003899">
    <property type="term" value="F:DNA-directed RNA polymerase activity"/>
    <property type="evidence" value="ECO:0007669"/>
    <property type="project" value="UniProtKB-UniRule"/>
</dbReference>
<dbReference type="GO" id="GO:0046983">
    <property type="term" value="F:protein dimerization activity"/>
    <property type="evidence" value="ECO:0007669"/>
    <property type="project" value="InterPro"/>
</dbReference>
<dbReference type="GO" id="GO:0006351">
    <property type="term" value="P:DNA-templated transcription"/>
    <property type="evidence" value="ECO:0007669"/>
    <property type="project" value="UniProtKB-UniRule"/>
</dbReference>
<dbReference type="CDD" id="cd06928">
    <property type="entry name" value="RNAP_alpha_NTD"/>
    <property type="match status" value="1"/>
</dbReference>
<dbReference type="FunFam" id="1.10.150.20:FF:000001">
    <property type="entry name" value="DNA-directed RNA polymerase subunit alpha"/>
    <property type="match status" value="1"/>
</dbReference>
<dbReference type="FunFam" id="2.170.120.12:FF:000001">
    <property type="entry name" value="DNA-directed RNA polymerase subunit alpha"/>
    <property type="match status" value="1"/>
</dbReference>
<dbReference type="Gene3D" id="1.10.150.20">
    <property type="entry name" value="5' to 3' exonuclease, C-terminal subdomain"/>
    <property type="match status" value="1"/>
</dbReference>
<dbReference type="Gene3D" id="2.170.120.12">
    <property type="entry name" value="DNA-directed RNA polymerase, insert domain"/>
    <property type="match status" value="1"/>
</dbReference>
<dbReference type="Gene3D" id="3.30.1360.10">
    <property type="entry name" value="RNA polymerase, RBP11-like subunit"/>
    <property type="match status" value="1"/>
</dbReference>
<dbReference type="HAMAP" id="MF_00059">
    <property type="entry name" value="RNApol_bact_RpoA"/>
    <property type="match status" value="1"/>
</dbReference>
<dbReference type="InterPro" id="IPR011262">
    <property type="entry name" value="DNA-dir_RNA_pol_insert"/>
</dbReference>
<dbReference type="InterPro" id="IPR011263">
    <property type="entry name" value="DNA-dir_RNA_pol_RpoA/D/Rpb3"/>
</dbReference>
<dbReference type="InterPro" id="IPR011773">
    <property type="entry name" value="DNA-dir_RpoA"/>
</dbReference>
<dbReference type="InterPro" id="IPR036603">
    <property type="entry name" value="RBP11-like"/>
</dbReference>
<dbReference type="InterPro" id="IPR011260">
    <property type="entry name" value="RNAP_asu_C"/>
</dbReference>
<dbReference type="InterPro" id="IPR036643">
    <property type="entry name" value="RNApol_insert_sf"/>
</dbReference>
<dbReference type="NCBIfam" id="NF003513">
    <property type="entry name" value="PRK05182.1-2"/>
    <property type="match status" value="1"/>
</dbReference>
<dbReference type="NCBIfam" id="NF003515">
    <property type="entry name" value="PRK05182.2-1"/>
    <property type="match status" value="1"/>
</dbReference>
<dbReference type="NCBIfam" id="NF003519">
    <property type="entry name" value="PRK05182.2-5"/>
    <property type="match status" value="1"/>
</dbReference>
<dbReference type="NCBIfam" id="TIGR02027">
    <property type="entry name" value="rpoA"/>
    <property type="match status" value="1"/>
</dbReference>
<dbReference type="Pfam" id="PF01000">
    <property type="entry name" value="RNA_pol_A_bac"/>
    <property type="match status" value="1"/>
</dbReference>
<dbReference type="Pfam" id="PF03118">
    <property type="entry name" value="RNA_pol_A_CTD"/>
    <property type="match status" value="1"/>
</dbReference>
<dbReference type="Pfam" id="PF01193">
    <property type="entry name" value="RNA_pol_L"/>
    <property type="match status" value="1"/>
</dbReference>
<dbReference type="SMART" id="SM00662">
    <property type="entry name" value="RPOLD"/>
    <property type="match status" value="1"/>
</dbReference>
<dbReference type="SUPFAM" id="SSF47789">
    <property type="entry name" value="C-terminal domain of RNA polymerase alpha subunit"/>
    <property type="match status" value="1"/>
</dbReference>
<dbReference type="SUPFAM" id="SSF56553">
    <property type="entry name" value="Insert subdomain of RNA polymerase alpha subunit"/>
    <property type="match status" value="1"/>
</dbReference>
<dbReference type="SUPFAM" id="SSF55257">
    <property type="entry name" value="RBP11-like subunits of RNA polymerase"/>
    <property type="match status" value="1"/>
</dbReference>
<evidence type="ECO:0000255" key="1">
    <source>
        <dbReference type="HAMAP-Rule" id="MF_00059"/>
    </source>
</evidence>
<comment type="function">
    <text evidence="1">DNA-dependent RNA polymerase catalyzes the transcription of DNA into RNA using the four ribonucleoside triphosphates as substrates.</text>
</comment>
<comment type="catalytic activity">
    <reaction evidence="1">
        <text>RNA(n) + a ribonucleoside 5'-triphosphate = RNA(n+1) + diphosphate</text>
        <dbReference type="Rhea" id="RHEA:21248"/>
        <dbReference type="Rhea" id="RHEA-COMP:14527"/>
        <dbReference type="Rhea" id="RHEA-COMP:17342"/>
        <dbReference type="ChEBI" id="CHEBI:33019"/>
        <dbReference type="ChEBI" id="CHEBI:61557"/>
        <dbReference type="ChEBI" id="CHEBI:140395"/>
        <dbReference type="EC" id="2.7.7.6"/>
    </reaction>
</comment>
<comment type="subunit">
    <text evidence="1">Homodimer. The RNAP catalytic core consists of 2 alpha, 1 beta, 1 beta' and 1 omega subunit. When a sigma factor is associated with the core the holoenzyme is formed, which can initiate transcription.</text>
</comment>
<comment type="domain">
    <text evidence="1">The N-terminal domain is essential for RNAP assembly and basal transcription, whereas the C-terminal domain is involved in interaction with transcriptional regulators and with upstream promoter elements.</text>
</comment>
<comment type="similarity">
    <text evidence="1">Belongs to the RNA polymerase alpha chain family.</text>
</comment>
<feature type="chain" id="PRO_0000175380" description="DNA-directed RNA polymerase subunit alpha">
    <location>
        <begin position="1"/>
        <end position="314"/>
    </location>
</feature>
<feature type="region of interest" description="Alpha N-terminal domain (alpha-NTD)" evidence="1">
    <location>
        <begin position="1"/>
        <end position="228"/>
    </location>
</feature>
<feature type="region of interest" description="Alpha C-terminal domain (alpha-CTD)" evidence="1">
    <location>
        <begin position="245"/>
        <end position="314"/>
    </location>
</feature>
<sequence>MIEIEKPRIETIEISEDAKFGKFVVEPLERGYGTTLGNSLRRILLSSLPGAAVKYIEIEGVLHEFSAVDNVVEDVSTIIMNIKQLALKIYSEEDKTLEIDVRDEGEVTASDITHDSDVEILNPELKIATVSKGGHLKIRLVANKGRGYALAEQNNTSDLPIGVIPVDSLYSPVERVNYTVENTRVGQSSDFDKLTLDVWTNGSITPQESVSLAAKIMTEHLNIFVGLTDEAQNAEIMIEKEEDQKEKVLEMSIEELDLSVRSYNCLKRAGINSVQELADKSEADMMKVRNLGRKSLEEVKYKLEDLGLGLRKED</sequence>
<protein>
    <recommendedName>
        <fullName evidence="1">DNA-directed RNA polymerase subunit alpha</fullName>
        <shortName evidence="1">RNAP subunit alpha</shortName>
        <ecNumber evidence="1">2.7.7.6</ecNumber>
    </recommendedName>
    <alternativeName>
        <fullName evidence="1">RNA polymerase subunit alpha</fullName>
    </alternativeName>
    <alternativeName>
        <fullName evidence="1">Transcriptase subunit alpha</fullName>
    </alternativeName>
</protein>
<accession>P66705</accession>
<accession>Q99S45</accession>